<accession>A5EBX1</accession>
<feature type="chain" id="PRO_0000339481" description="ATP synthase subunit beta 2">
    <location>
        <begin position="1"/>
        <end position="476"/>
    </location>
</feature>
<feature type="binding site" evidence="1">
    <location>
        <begin position="160"/>
        <end position="167"/>
    </location>
    <ligand>
        <name>ATP</name>
        <dbReference type="ChEBI" id="CHEBI:30616"/>
    </ligand>
</feature>
<protein>
    <recommendedName>
        <fullName evidence="1">ATP synthase subunit beta 2</fullName>
        <ecNumber evidence="1">7.1.2.2</ecNumber>
    </recommendedName>
    <alternativeName>
        <fullName evidence="1">ATP synthase F1 sector subunit beta 2</fullName>
    </alternativeName>
    <alternativeName>
        <fullName evidence="1">F-ATPase subunit beta 2</fullName>
    </alternativeName>
</protein>
<evidence type="ECO:0000255" key="1">
    <source>
        <dbReference type="HAMAP-Rule" id="MF_01347"/>
    </source>
</evidence>
<comment type="function">
    <text evidence="1">Produces ATP from ADP in the presence of a proton gradient across the membrane. The catalytic sites are hosted primarily by the beta subunits.</text>
</comment>
<comment type="catalytic activity">
    <reaction evidence="1">
        <text>ATP + H2O + 4 H(+)(in) = ADP + phosphate + 5 H(+)(out)</text>
        <dbReference type="Rhea" id="RHEA:57720"/>
        <dbReference type="ChEBI" id="CHEBI:15377"/>
        <dbReference type="ChEBI" id="CHEBI:15378"/>
        <dbReference type="ChEBI" id="CHEBI:30616"/>
        <dbReference type="ChEBI" id="CHEBI:43474"/>
        <dbReference type="ChEBI" id="CHEBI:456216"/>
        <dbReference type="EC" id="7.1.2.2"/>
    </reaction>
</comment>
<comment type="subunit">
    <text evidence="1">F-type ATPases have 2 components, CF(1) - the catalytic core - and CF(0) - the membrane proton channel. CF(1) has five subunits: alpha(3), beta(3), gamma(1), delta(1), epsilon(1). CF(0) has four main subunits: a(1), b(1), b'(1) and c(9-12).</text>
</comment>
<comment type="subcellular location">
    <subcellularLocation>
        <location evidence="1">Cell inner membrane</location>
        <topology evidence="1">Peripheral membrane protein</topology>
    </subcellularLocation>
</comment>
<comment type="similarity">
    <text evidence="1">Belongs to the ATPase alpha/beta chains family.</text>
</comment>
<proteinExistence type="inferred from homology"/>
<keyword id="KW-0066">ATP synthesis</keyword>
<keyword id="KW-0067">ATP-binding</keyword>
<keyword id="KW-0997">Cell inner membrane</keyword>
<keyword id="KW-1003">Cell membrane</keyword>
<keyword id="KW-0139">CF(1)</keyword>
<keyword id="KW-0375">Hydrogen ion transport</keyword>
<keyword id="KW-0406">Ion transport</keyword>
<keyword id="KW-0472">Membrane</keyword>
<keyword id="KW-0547">Nucleotide-binding</keyword>
<keyword id="KW-1185">Reference proteome</keyword>
<keyword id="KW-1278">Translocase</keyword>
<keyword id="KW-0813">Transport</keyword>
<name>ATPB2_BRASB</name>
<gene>
    <name evidence="1" type="primary">atpD2</name>
    <name type="ordered locus">BBta_1440</name>
</gene>
<sequence length="476" mass="50916">MADASHDTQVSGHLTAIHGSVVDVRFPQGVLPALNEGIVIDRDEPTPVLAEVQQHLDPVTIRAVALGNTAGLSRGVSARALGTPIQTPVGDAVLGRLLNAVGKPADRGPELPPSTVFRPIHASAPALNRLGASQEIFHTGIKVIDLLAPLVKGGKAAMFGGAGVGKTVLIMELIRTTVERYSGISVFAGIGERSREGHELLLELKQSGVLPRTALVFGQMNEPPGARWRAGLTALTIAEHFRDVQHENVLLLIDNVYRLVQAGGEVSGLLGRLPSRVGYQPTLASEIAELQERIASVAGAAITSIQAVYVPADDFTDPAVAEIFSHLDSSIVLSRQMASEAMYPAVDPLASSSTLLDARLVGEGHYRTAQEVRKTIAHYRDLQEIIALLGIEELSAIDRQAVKRARRLMRFLTQPFMVTVAFTGKEGRTVEVADTLAGCRAILDGEADNWAESSLYMIGVLEEARERERASAKAMS</sequence>
<reference key="1">
    <citation type="journal article" date="2007" name="Science">
        <title>Legumes symbioses: absence of nod genes in photosynthetic bradyrhizobia.</title>
        <authorList>
            <person name="Giraud E."/>
            <person name="Moulin L."/>
            <person name="Vallenet D."/>
            <person name="Barbe V."/>
            <person name="Cytryn E."/>
            <person name="Avarre J.-C."/>
            <person name="Jaubert M."/>
            <person name="Simon D."/>
            <person name="Cartieaux F."/>
            <person name="Prin Y."/>
            <person name="Bena G."/>
            <person name="Hannibal L."/>
            <person name="Fardoux J."/>
            <person name="Kojadinovic M."/>
            <person name="Vuillet L."/>
            <person name="Lajus A."/>
            <person name="Cruveiller S."/>
            <person name="Rouy Z."/>
            <person name="Mangenot S."/>
            <person name="Segurens B."/>
            <person name="Dossat C."/>
            <person name="Franck W.L."/>
            <person name="Chang W.-S."/>
            <person name="Saunders E."/>
            <person name="Bruce D."/>
            <person name="Richardson P."/>
            <person name="Normand P."/>
            <person name="Dreyfus B."/>
            <person name="Pignol D."/>
            <person name="Stacey G."/>
            <person name="Emerich D."/>
            <person name="Vermeglio A."/>
            <person name="Medigue C."/>
            <person name="Sadowsky M."/>
        </authorList>
    </citation>
    <scope>NUCLEOTIDE SEQUENCE [LARGE SCALE GENOMIC DNA]</scope>
    <source>
        <strain>BTAi1 / ATCC BAA-1182</strain>
    </source>
</reference>
<dbReference type="EC" id="7.1.2.2" evidence="1"/>
<dbReference type="EMBL" id="CP000494">
    <property type="protein sequence ID" value="ABQ33665.1"/>
    <property type="molecule type" value="Genomic_DNA"/>
</dbReference>
<dbReference type="RefSeq" id="WP_012041706.1">
    <property type="nucleotide sequence ID" value="NC_009485.1"/>
</dbReference>
<dbReference type="SMR" id="A5EBX1"/>
<dbReference type="STRING" id="288000.BBta_1440"/>
<dbReference type="KEGG" id="bbt:BBta_1440"/>
<dbReference type="eggNOG" id="COG0055">
    <property type="taxonomic scope" value="Bacteria"/>
</dbReference>
<dbReference type="HOGENOM" id="CLU_022398_0_2_5"/>
<dbReference type="OrthoDB" id="9801639at2"/>
<dbReference type="Proteomes" id="UP000000246">
    <property type="component" value="Chromosome"/>
</dbReference>
<dbReference type="GO" id="GO:0005886">
    <property type="term" value="C:plasma membrane"/>
    <property type="evidence" value="ECO:0007669"/>
    <property type="project" value="UniProtKB-SubCell"/>
</dbReference>
<dbReference type="GO" id="GO:0045259">
    <property type="term" value="C:proton-transporting ATP synthase complex"/>
    <property type="evidence" value="ECO:0007669"/>
    <property type="project" value="UniProtKB-KW"/>
</dbReference>
<dbReference type="GO" id="GO:0005524">
    <property type="term" value="F:ATP binding"/>
    <property type="evidence" value="ECO:0007669"/>
    <property type="project" value="UniProtKB-UniRule"/>
</dbReference>
<dbReference type="GO" id="GO:0016887">
    <property type="term" value="F:ATP hydrolysis activity"/>
    <property type="evidence" value="ECO:0007669"/>
    <property type="project" value="InterPro"/>
</dbReference>
<dbReference type="GO" id="GO:0046933">
    <property type="term" value="F:proton-transporting ATP synthase activity, rotational mechanism"/>
    <property type="evidence" value="ECO:0007669"/>
    <property type="project" value="UniProtKB-UniRule"/>
</dbReference>
<dbReference type="CDD" id="cd18110">
    <property type="entry name" value="ATP-synt_F1_beta_C"/>
    <property type="match status" value="1"/>
</dbReference>
<dbReference type="CDD" id="cd18115">
    <property type="entry name" value="ATP-synt_F1_beta_N"/>
    <property type="match status" value="1"/>
</dbReference>
<dbReference type="CDD" id="cd01133">
    <property type="entry name" value="F1-ATPase_beta_CD"/>
    <property type="match status" value="1"/>
</dbReference>
<dbReference type="FunFam" id="3.40.50.300:FF:001630">
    <property type="entry name" value="ATP synthase subunit beta"/>
    <property type="match status" value="1"/>
</dbReference>
<dbReference type="Gene3D" id="2.40.10.170">
    <property type="match status" value="1"/>
</dbReference>
<dbReference type="Gene3D" id="1.10.1140.10">
    <property type="entry name" value="Bovine Mitochondrial F1-atpase, Atp Synthase Beta Chain, Chain D, domain 3"/>
    <property type="match status" value="1"/>
</dbReference>
<dbReference type="Gene3D" id="3.40.50.300">
    <property type="entry name" value="P-loop containing nucleotide triphosphate hydrolases"/>
    <property type="match status" value="1"/>
</dbReference>
<dbReference type="HAMAP" id="MF_01347">
    <property type="entry name" value="ATP_synth_beta_bact"/>
    <property type="match status" value="1"/>
</dbReference>
<dbReference type="InterPro" id="IPR003593">
    <property type="entry name" value="AAA+_ATPase"/>
</dbReference>
<dbReference type="InterPro" id="IPR055190">
    <property type="entry name" value="ATP-synt_VA_C"/>
</dbReference>
<dbReference type="InterPro" id="IPR005722">
    <property type="entry name" value="ATP_synth_F1_bsu"/>
</dbReference>
<dbReference type="InterPro" id="IPR020003">
    <property type="entry name" value="ATPase_a/bsu_AS"/>
</dbReference>
<dbReference type="InterPro" id="IPR050053">
    <property type="entry name" value="ATPase_alpha/beta_chains"/>
</dbReference>
<dbReference type="InterPro" id="IPR004100">
    <property type="entry name" value="ATPase_F1/V1/A1_a/bsu_N"/>
</dbReference>
<dbReference type="InterPro" id="IPR036121">
    <property type="entry name" value="ATPase_F1/V1/A1_a/bsu_N_sf"/>
</dbReference>
<dbReference type="InterPro" id="IPR000194">
    <property type="entry name" value="ATPase_F1/V1/A1_a/bsu_nucl-bd"/>
</dbReference>
<dbReference type="InterPro" id="IPR024034">
    <property type="entry name" value="ATPase_F1/V1_b/a_C"/>
</dbReference>
<dbReference type="InterPro" id="IPR027417">
    <property type="entry name" value="P-loop_NTPase"/>
</dbReference>
<dbReference type="NCBIfam" id="TIGR01039">
    <property type="entry name" value="atpD"/>
    <property type="match status" value="1"/>
</dbReference>
<dbReference type="PANTHER" id="PTHR15184">
    <property type="entry name" value="ATP SYNTHASE"/>
    <property type="match status" value="1"/>
</dbReference>
<dbReference type="PANTHER" id="PTHR15184:SF71">
    <property type="entry name" value="ATP SYNTHASE SUBUNIT BETA, MITOCHONDRIAL"/>
    <property type="match status" value="1"/>
</dbReference>
<dbReference type="Pfam" id="PF00006">
    <property type="entry name" value="ATP-synt_ab"/>
    <property type="match status" value="1"/>
</dbReference>
<dbReference type="Pfam" id="PF02874">
    <property type="entry name" value="ATP-synt_ab_N"/>
    <property type="match status" value="1"/>
</dbReference>
<dbReference type="Pfam" id="PF22919">
    <property type="entry name" value="ATP-synt_VA_C"/>
    <property type="match status" value="1"/>
</dbReference>
<dbReference type="SMART" id="SM00382">
    <property type="entry name" value="AAA"/>
    <property type="match status" value="1"/>
</dbReference>
<dbReference type="SUPFAM" id="SSF47917">
    <property type="entry name" value="C-terminal domain of alpha and beta subunits of F1 ATP synthase"/>
    <property type="match status" value="1"/>
</dbReference>
<dbReference type="SUPFAM" id="SSF50615">
    <property type="entry name" value="N-terminal domain of alpha and beta subunits of F1 ATP synthase"/>
    <property type="match status" value="1"/>
</dbReference>
<dbReference type="SUPFAM" id="SSF52540">
    <property type="entry name" value="P-loop containing nucleoside triphosphate hydrolases"/>
    <property type="match status" value="1"/>
</dbReference>
<dbReference type="PROSITE" id="PS00152">
    <property type="entry name" value="ATPASE_ALPHA_BETA"/>
    <property type="match status" value="1"/>
</dbReference>
<organism>
    <name type="scientific">Bradyrhizobium sp. (strain BTAi1 / ATCC BAA-1182)</name>
    <dbReference type="NCBI Taxonomy" id="288000"/>
    <lineage>
        <taxon>Bacteria</taxon>
        <taxon>Pseudomonadati</taxon>
        <taxon>Pseudomonadota</taxon>
        <taxon>Alphaproteobacteria</taxon>
        <taxon>Hyphomicrobiales</taxon>
        <taxon>Nitrobacteraceae</taxon>
        <taxon>Bradyrhizobium</taxon>
    </lineage>
</organism>